<comment type="function">
    <text evidence="1 2 3">Required for KRAS signaling regulation and modulation of cell proliferation (PubMed:31406347). Regulator of KRAS prenylation, and probably prenylation of other small GTPases (By similarity). Required for lymphocyte development and function (PubMed:32220963). Not required for myeloid cell development (PubMed:32220963).</text>
</comment>
<comment type="subunit">
    <text evidence="1 3">Homodimer (PubMed:32220963). Interacts with GPR89; the interaction stabilizes GPR89 (PubMed:32220963). Interacts with RAP1GDS1 (By similarity).</text>
</comment>
<comment type="alternative products">
    <event type="alternative splicing"/>
    <isoform>
        <id>Q9D4V7-1</id>
        <name>1</name>
        <sequence type="displayed"/>
    </isoform>
    <isoform>
        <id>Q9D4V7-2</id>
        <name>2</name>
        <sequence type="described" ref="VSP_029723"/>
    </isoform>
</comment>
<comment type="disruption phenotype">
    <text evidence="3">Embryonic lethal.</text>
</comment>
<comment type="similarity">
    <text evidence="5">Belongs to the small GTPase superfamily. Rab family.</text>
</comment>
<organism>
    <name type="scientific">Mus musculus</name>
    <name type="common">Mouse</name>
    <dbReference type="NCBI Taxonomy" id="10090"/>
    <lineage>
        <taxon>Eukaryota</taxon>
        <taxon>Metazoa</taxon>
        <taxon>Chordata</taxon>
        <taxon>Craniata</taxon>
        <taxon>Vertebrata</taxon>
        <taxon>Euteleostomi</taxon>
        <taxon>Mammalia</taxon>
        <taxon>Eutheria</taxon>
        <taxon>Euarchontoglires</taxon>
        <taxon>Glires</taxon>
        <taxon>Rodentia</taxon>
        <taxon>Myomorpha</taxon>
        <taxon>Muroidea</taxon>
        <taxon>Muridae</taxon>
        <taxon>Murinae</taxon>
        <taxon>Mus</taxon>
        <taxon>Mus</taxon>
    </lineage>
</organism>
<sequence>MASLDRVKVLVLGDSGVGKSSLVHLLCHNQVLGNPSWTVGCSVDIRVHDYKEGTPEEKTYYIELWDVGGSVGSASSVKSTRAVFYNSVNGIILVHDLTNKKSSQNLYRWSLEVLNRDAVPTGVLVTNGDYDREQFADNQIPLLVIGTKLDQIHETKRHEVLIRTAFLAEDFNAEEINLDCTNPRSSAAGSSNAVKLSRFFDKVIEKRYFFREGNQIPGFSDRKRFGGGALKNFHCD</sequence>
<gene>
    <name type="primary">Rabl3</name>
</gene>
<reference key="1">
    <citation type="journal article" date="2005" name="Science">
        <title>The transcriptional landscape of the mammalian genome.</title>
        <authorList>
            <person name="Carninci P."/>
            <person name="Kasukawa T."/>
            <person name="Katayama S."/>
            <person name="Gough J."/>
            <person name="Frith M.C."/>
            <person name="Maeda N."/>
            <person name="Oyama R."/>
            <person name="Ravasi T."/>
            <person name="Lenhard B."/>
            <person name="Wells C."/>
            <person name="Kodzius R."/>
            <person name="Shimokawa K."/>
            <person name="Bajic V.B."/>
            <person name="Brenner S.E."/>
            <person name="Batalov S."/>
            <person name="Forrest A.R."/>
            <person name="Zavolan M."/>
            <person name="Davis M.J."/>
            <person name="Wilming L.G."/>
            <person name="Aidinis V."/>
            <person name="Allen J.E."/>
            <person name="Ambesi-Impiombato A."/>
            <person name="Apweiler R."/>
            <person name="Aturaliya R.N."/>
            <person name="Bailey T.L."/>
            <person name="Bansal M."/>
            <person name="Baxter L."/>
            <person name="Beisel K.W."/>
            <person name="Bersano T."/>
            <person name="Bono H."/>
            <person name="Chalk A.M."/>
            <person name="Chiu K.P."/>
            <person name="Choudhary V."/>
            <person name="Christoffels A."/>
            <person name="Clutterbuck D.R."/>
            <person name="Crowe M.L."/>
            <person name="Dalla E."/>
            <person name="Dalrymple B.P."/>
            <person name="de Bono B."/>
            <person name="Della Gatta G."/>
            <person name="di Bernardo D."/>
            <person name="Down T."/>
            <person name="Engstrom P."/>
            <person name="Fagiolini M."/>
            <person name="Faulkner G."/>
            <person name="Fletcher C.F."/>
            <person name="Fukushima T."/>
            <person name="Furuno M."/>
            <person name="Futaki S."/>
            <person name="Gariboldi M."/>
            <person name="Georgii-Hemming P."/>
            <person name="Gingeras T.R."/>
            <person name="Gojobori T."/>
            <person name="Green R.E."/>
            <person name="Gustincich S."/>
            <person name="Harbers M."/>
            <person name="Hayashi Y."/>
            <person name="Hensch T.K."/>
            <person name="Hirokawa N."/>
            <person name="Hill D."/>
            <person name="Huminiecki L."/>
            <person name="Iacono M."/>
            <person name="Ikeo K."/>
            <person name="Iwama A."/>
            <person name="Ishikawa T."/>
            <person name="Jakt M."/>
            <person name="Kanapin A."/>
            <person name="Katoh M."/>
            <person name="Kawasawa Y."/>
            <person name="Kelso J."/>
            <person name="Kitamura H."/>
            <person name="Kitano H."/>
            <person name="Kollias G."/>
            <person name="Krishnan S.P."/>
            <person name="Kruger A."/>
            <person name="Kummerfeld S.K."/>
            <person name="Kurochkin I.V."/>
            <person name="Lareau L.F."/>
            <person name="Lazarevic D."/>
            <person name="Lipovich L."/>
            <person name="Liu J."/>
            <person name="Liuni S."/>
            <person name="McWilliam S."/>
            <person name="Madan Babu M."/>
            <person name="Madera M."/>
            <person name="Marchionni L."/>
            <person name="Matsuda H."/>
            <person name="Matsuzawa S."/>
            <person name="Miki H."/>
            <person name="Mignone F."/>
            <person name="Miyake S."/>
            <person name="Morris K."/>
            <person name="Mottagui-Tabar S."/>
            <person name="Mulder N."/>
            <person name="Nakano N."/>
            <person name="Nakauchi H."/>
            <person name="Ng P."/>
            <person name="Nilsson R."/>
            <person name="Nishiguchi S."/>
            <person name="Nishikawa S."/>
            <person name="Nori F."/>
            <person name="Ohara O."/>
            <person name="Okazaki Y."/>
            <person name="Orlando V."/>
            <person name="Pang K.C."/>
            <person name="Pavan W.J."/>
            <person name="Pavesi G."/>
            <person name="Pesole G."/>
            <person name="Petrovsky N."/>
            <person name="Piazza S."/>
            <person name="Reed J."/>
            <person name="Reid J.F."/>
            <person name="Ring B.Z."/>
            <person name="Ringwald M."/>
            <person name="Rost B."/>
            <person name="Ruan Y."/>
            <person name="Salzberg S.L."/>
            <person name="Sandelin A."/>
            <person name="Schneider C."/>
            <person name="Schoenbach C."/>
            <person name="Sekiguchi K."/>
            <person name="Semple C.A."/>
            <person name="Seno S."/>
            <person name="Sessa L."/>
            <person name="Sheng Y."/>
            <person name="Shibata Y."/>
            <person name="Shimada H."/>
            <person name="Shimada K."/>
            <person name="Silva D."/>
            <person name="Sinclair B."/>
            <person name="Sperling S."/>
            <person name="Stupka E."/>
            <person name="Sugiura K."/>
            <person name="Sultana R."/>
            <person name="Takenaka Y."/>
            <person name="Taki K."/>
            <person name="Tammoja K."/>
            <person name="Tan S.L."/>
            <person name="Tang S."/>
            <person name="Taylor M.S."/>
            <person name="Tegner J."/>
            <person name="Teichmann S.A."/>
            <person name="Ueda H.R."/>
            <person name="van Nimwegen E."/>
            <person name="Verardo R."/>
            <person name="Wei C.L."/>
            <person name="Yagi K."/>
            <person name="Yamanishi H."/>
            <person name="Zabarovsky E."/>
            <person name="Zhu S."/>
            <person name="Zimmer A."/>
            <person name="Hide W."/>
            <person name="Bult C."/>
            <person name="Grimmond S.M."/>
            <person name="Teasdale R.D."/>
            <person name="Liu E.T."/>
            <person name="Brusic V."/>
            <person name="Quackenbush J."/>
            <person name="Wahlestedt C."/>
            <person name="Mattick J.S."/>
            <person name="Hume D.A."/>
            <person name="Kai C."/>
            <person name="Sasaki D."/>
            <person name="Tomaru Y."/>
            <person name="Fukuda S."/>
            <person name="Kanamori-Katayama M."/>
            <person name="Suzuki M."/>
            <person name="Aoki J."/>
            <person name="Arakawa T."/>
            <person name="Iida J."/>
            <person name="Imamura K."/>
            <person name="Itoh M."/>
            <person name="Kato T."/>
            <person name="Kawaji H."/>
            <person name="Kawagashira N."/>
            <person name="Kawashima T."/>
            <person name="Kojima M."/>
            <person name="Kondo S."/>
            <person name="Konno H."/>
            <person name="Nakano K."/>
            <person name="Ninomiya N."/>
            <person name="Nishio T."/>
            <person name="Okada M."/>
            <person name="Plessy C."/>
            <person name="Shibata K."/>
            <person name="Shiraki T."/>
            <person name="Suzuki S."/>
            <person name="Tagami M."/>
            <person name="Waki K."/>
            <person name="Watahiki A."/>
            <person name="Okamura-Oho Y."/>
            <person name="Suzuki H."/>
            <person name="Kawai J."/>
            <person name="Hayashizaki Y."/>
        </authorList>
    </citation>
    <scope>NUCLEOTIDE SEQUENCE [LARGE SCALE MRNA] (ISOFORMS 1 AND 2)</scope>
    <source>
        <strain>C57BL/6J</strain>
        <tissue>Embryo</tissue>
        <tissue>Testis</tissue>
    </source>
</reference>
<reference key="2">
    <citation type="journal article" date="2004" name="Genome Res.">
        <title>The status, quality, and expansion of the NIH full-length cDNA project: the Mammalian Gene Collection (MGC).</title>
        <authorList>
            <consortium name="The MGC Project Team"/>
        </authorList>
    </citation>
    <scope>NUCLEOTIDE SEQUENCE [LARGE SCALE MRNA] (ISOFORM 1)</scope>
    <source>
        <strain>B5/EGFP</strain>
        <tissue>Trophoblast stem cell</tissue>
    </source>
</reference>
<reference key="3">
    <citation type="journal article" date="2010" name="Cell">
        <title>A tissue-specific atlas of mouse protein phosphorylation and expression.</title>
        <authorList>
            <person name="Huttlin E.L."/>
            <person name="Jedrychowski M.P."/>
            <person name="Elias J.E."/>
            <person name="Goswami T."/>
            <person name="Rad R."/>
            <person name="Beausoleil S.A."/>
            <person name="Villen J."/>
            <person name="Haas W."/>
            <person name="Sowa M.E."/>
            <person name="Gygi S.P."/>
        </authorList>
    </citation>
    <scope>IDENTIFICATION BY MASS SPECTROMETRY [LARGE SCALE ANALYSIS]</scope>
    <source>
        <tissue>Lung</tissue>
        <tissue>Testis</tissue>
    </source>
</reference>
<reference key="4">
    <citation type="journal article" date="2019" name="Nat. Genet.">
        <title>Mutations in RABL3 alter KRAS prenylation and are associated with hereditary pancreatic cancer.</title>
        <authorList>
            <person name="Nissim S."/>
            <person name="Leshchiner I."/>
            <person name="Mancias J.D."/>
            <person name="Greenblatt M.B."/>
            <person name="Maertens O."/>
            <person name="Cassa C.A."/>
            <person name="Rosenfeld J.A."/>
            <person name="Cox A.G."/>
            <person name="Hedgepeth J."/>
            <person name="Wucherpfennig J.I."/>
            <person name="Kim A.J."/>
            <person name="Henderson J.E."/>
            <person name="Gonyo P."/>
            <person name="Brandt A."/>
            <person name="Lorimer E."/>
            <person name="Unger B."/>
            <person name="Prokop J.W."/>
            <person name="Heidel J.R."/>
            <person name="Wang X.X."/>
            <person name="Ukaegbu C.I."/>
            <person name="Jennings B.C."/>
            <person name="Paulo J.A."/>
            <person name="Gableske S."/>
            <person name="Fierke C.A."/>
            <person name="Getz G."/>
            <person name="Sunyaev S.R."/>
            <person name="Wade Harper J."/>
            <person name="Cichowski K."/>
            <person name="Kimmelman A.C."/>
            <person name="Houvras Y."/>
            <person name="Syngal S."/>
            <person name="Williams C."/>
            <person name="Goessling W."/>
        </authorList>
    </citation>
    <scope>FUNCTION</scope>
</reference>
<reference key="5">
    <citation type="journal article" date="2020" name="Proc. Natl. Acad. Sci. U.S.A.">
        <title>Genetic and structural studies of RABL3 reveal an essential role in lymphoid development and function.</title>
        <authorList>
            <person name="Zhong X."/>
            <person name="Su L."/>
            <person name="Yang Y."/>
            <person name="Nair-Gill E."/>
            <person name="Tang M."/>
            <person name="Anderton P."/>
            <person name="Li X."/>
            <person name="Wang J."/>
            <person name="Zhan X."/>
            <person name="Tomchick D.R."/>
            <person name="Brautigam C.A."/>
            <person name="Moresco E.M.Y."/>
            <person name="Choi J.H."/>
            <person name="Beutler B."/>
        </authorList>
    </citation>
    <scope>X-RAY CRYSTALLOGRAPHY (1.95 ANGSTROMS) OF 2-216 OF WILD-TYPE AND XIAMEN MUTANT IN COMPLEX WITH MAGNESIUM AND GDP OR GTP-GAMMA-S</scope>
    <scope>FUNCTION</scope>
    <scope>SUBUNIT</scope>
    <scope>INTERACTION WITH GPR89</scope>
    <scope>DISRUPTION PHENOTYPE</scope>
    <scope>MUTAGENESIS OF 43-VAL--ARG-46</scope>
</reference>
<accession>Q9D4V7</accession>
<accession>Q8BMU2</accession>
<accession>Q9D0M6</accession>
<keyword id="KW-0002">3D-structure</keyword>
<keyword id="KW-0025">Alternative splicing</keyword>
<keyword id="KW-0342">GTP-binding</keyword>
<keyword id="KW-0547">Nucleotide-binding</keyword>
<keyword id="KW-1185">Reference proteome</keyword>
<name>RABL3_MOUSE</name>
<evidence type="ECO:0000250" key="1">
    <source>
        <dbReference type="UniProtKB" id="Q5HYI8"/>
    </source>
</evidence>
<evidence type="ECO:0000269" key="2">
    <source>
    </source>
</evidence>
<evidence type="ECO:0000269" key="3">
    <source>
    </source>
</evidence>
<evidence type="ECO:0000303" key="4">
    <source>
    </source>
</evidence>
<evidence type="ECO:0000305" key="5"/>
<evidence type="ECO:0007744" key="6">
    <source>
        <dbReference type="PDB" id="6VII"/>
    </source>
</evidence>
<evidence type="ECO:0007744" key="7">
    <source>
        <dbReference type="PDB" id="6VIJ"/>
    </source>
</evidence>
<evidence type="ECO:0007829" key="8">
    <source>
        <dbReference type="PDB" id="6VIH"/>
    </source>
</evidence>
<evidence type="ECO:0007829" key="9">
    <source>
        <dbReference type="PDB" id="6VII"/>
    </source>
</evidence>
<evidence type="ECO:0007829" key="10">
    <source>
        <dbReference type="PDB" id="6VIK"/>
    </source>
</evidence>
<feature type="chain" id="PRO_0000312167" description="Rab-like protein 3">
    <location>
        <begin position="1"/>
        <end position="236"/>
    </location>
</feature>
<feature type="region of interest" description="Small GTPase-like">
    <location>
        <begin position="1"/>
        <end position="235"/>
    </location>
</feature>
<feature type="binding site" evidence="3 6 7">
    <location>
        <begin position="16"/>
        <end position="21"/>
    </location>
    <ligand>
        <name>GTP</name>
        <dbReference type="ChEBI" id="CHEBI:37565"/>
    </ligand>
</feature>
<feature type="binding site" evidence="3 6 7">
    <location>
        <begin position="148"/>
        <end position="150"/>
    </location>
    <ligand>
        <name>GTP</name>
        <dbReference type="ChEBI" id="CHEBI:37565"/>
    </ligand>
</feature>
<feature type="binding site" evidence="3 6 7">
    <location>
        <begin position="179"/>
        <end position="180"/>
    </location>
    <ligand>
        <name>GTP</name>
        <dbReference type="ChEBI" id="CHEBI:37565"/>
    </ligand>
</feature>
<feature type="splice variant" id="VSP_029723" description="In isoform 2." evidence="4">
    <location>
        <begin position="130"/>
        <end position="236"/>
    </location>
</feature>
<feature type="mutagenesis site" description="In xiamen; reduced Rabl3 expression, reduced interaction with Gpr89, reduced thermal stability, reduced frequency of CD3+ T cells, increased CD4+-to-CD8+ T cell ratio, higher CD44 expression in CD8+ T cells and increased B cell-to-T cell ratio." evidence="3">
    <location>
        <begin position="43"/>
        <end position="46"/>
    </location>
</feature>
<feature type="sequence conflict" description="In Ref. 1; BAC25804." evidence="5" ref="1">
    <original>S</original>
    <variation>P</variation>
    <location>
        <position position="185"/>
    </location>
</feature>
<feature type="strand" evidence="10">
    <location>
        <begin position="8"/>
        <end position="12"/>
    </location>
</feature>
<feature type="helix" evidence="10">
    <location>
        <begin position="19"/>
        <end position="26"/>
    </location>
</feature>
<feature type="turn" evidence="10">
    <location>
        <begin position="27"/>
        <end position="29"/>
    </location>
</feature>
<feature type="strand" evidence="10">
    <location>
        <begin position="31"/>
        <end position="33"/>
    </location>
</feature>
<feature type="strand" evidence="10">
    <location>
        <begin position="38"/>
        <end position="43"/>
    </location>
</feature>
<feature type="strand" evidence="10">
    <location>
        <begin position="48"/>
        <end position="50"/>
    </location>
</feature>
<feature type="turn" evidence="10">
    <location>
        <begin position="51"/>
        <end position="53"/>
    </location>
</feature>
<feature type="strand" evidence="10">
    <location>
        <begin position="58"/>
        <end position="66"/>
    </location>
</feature>
<feature type="helix" evidence="8">
    <location>
        <begin position="75"/>
        <end position="78"/>
    </location>
</feature>
<feature type="helix" evidence="10">
    <location>
        <begin position="82"/>
        <end position="84"/>
    </location>
</feature>
<feature type="strand" evidence="10">
    <location>
        <begin position="90"/>
        <end position="96"/>
    </location>
</feature>
<feature type="helix" evidence="10">
    <location>
        <begin position="100"/>
        <end position="104"/>
    </location>
</feature>
<feature type="helix" evidence="10">
    <location>
        <begin position="106"/>
        <end position="111"/>
    </location>
</feature>
<feature type="helix" evidence="9">
    <location>
        <begin position="132"/>
        <end position="137"/>
    </location>
</feature>
<feature type="strand" evidence="10">
    <location>
        <begin position="142"/>
        <end position="147"/>
    </location>
</feature>
<feature type="helix" evidence="10">
    <location>
        <begin position="149"/>
        <end position="151"/>
    </location>
</feature>
<feature type="helix" evidence="10">
    <location>
        <begin position="154"/>
        <end position="170"/>
    </location>
</feature>
<feature type="strand" evidence="10">
    <location>
        <begin position="174"/>
        <end position="177"/>
    </location>
</feature>
<feature type="helix" evidence="10">
    <location>
        <begin position="183"/>
        <end position="186"/>
    </location>
</feature>
<feature type="helix" evidence="10">
    <location>
        <begin position="191"/>
        <end position="206"/>
    </location>
</feature>
<proteinExistence type="evidence at protein level"/>
<dbReference type="EMBL" id="AK011280">
    <property type="protein sequence ID" value="BAB27514.1"/>
    <property type="molecule type" value="mRNA"/>
</dbReference>
<dbReference type="EMBL" id="AK016099">
    <property type="protein sequence ID" value="BAB30113.1"/>
    <property type="molecule type" value="mRNA"/>
</dbReference>
<dbReference type="EMBL" id="AK028195">
    <property type="protein sequence ID" value="BAC25804.1"/>
    <property type="molecule type" value="mRNA"/>
</dbReference>
<dbReference type="EMBL" id="BC050194">
    <property type="protein sequence ID" value="AAH50194.1"/>
    <property type="molecule type" value="mRNA"/>
</dbReference>
<dbReference type="CCDS" id="CCDS37338.1">
    <molecule id="Q9D4V7-1"/>
</dbReference>
<dbReference type="RefSeq" id="NP_001035964.1">
    <molecule id="Q9D4V7-1"/>
    <property type="nucleotide sequence ID" value="NM_001042499.1"/>
</dbReference>
<dbReference type="PDB" id="6VIH">
    <property type="method" value="X-ray"/>
    <property type="resolution" value="2.99 A"/>
    <property type="chains" value="A/B=2-216"/>
</dbReference>
<dbReference type="PDB" id="6VII">
    <property type="method" value="X-ray"/>
    <property type="resolution" value="2.00 A"/>
    <property type="chains" value="A/B=2-216"/>
</dbReference>
<dbReference type="PDB" id="6VIJ">
    <property type="method" value="X-ray"/>
    <property type="resolution" value="1.95 A"/>
    <property type="chains" value="A/B=2-216"/>
</dbReference>
<dbReference type="PDB" id="6VIK">
    <property type="method" value="X-ray"/>
    <property type="resolution" value="1.70 A"/>
    <property type="chains" value="B=2-216"/>
</dbReference>
<dbReference type="PDBsum" id="6VIH"/>
<dbReference type="PDBsum" id="6VII"/>
<dbReference type="PDBsum" id="6VIJ"/>
<dbReference type="PDBsum" id="6VIK"/>
<dbReference type="SMR" id="Q9D4V7"/>
<dbReference type="BioGRID" id="212342">
    <property type="interactions" value="2"/>
</dbReference>
<dbReference type="FunCoup" id="Q9D4V7">
    <property type="interactions" value="2388"/>
</dbReference>
<dbReference type="IntAct" id="Q9D4V7">
    <property type="interactions" value="2"/>
</dbReference>
<dbReference type="STRING" id="10090.ENSMUSP00000023524"/>
<dbReference type="iPTMnet" id="Q9D4V7"/>
<dbReference type="PhosphoSitePlus" id="Q9D4V7"/>
<dbReference type="PaxDb" id="10090-ENSMUSP00000023524"/>
<dbReference type="PeptideAtlas" id="Q9D4V7"/>
<dbReference type="ProteomicsDB" id="255069">
    <molecule id="Q9D4V7-1"/>
</dbReference>
<dbReference type="ProteomicsDB" id="255070">
    <molecule id="Q9D4V7-2"/>
</dbReference>
<dbReference type="Pumba" id="Q9D4V7"/>
<dbReference type="Antibodypedia" id="32810">
    <property type="antibodies" value="46 antibodies from 20 providers"/>
</dbReference>
<dbReference type="Ensembl" id="ENSMUST00000023524.13">
    <molecule id="Q9D4V7-1"/>
    <property type="protein sequence ID" value="ENSMUSP00000023524.7"/>
    <property type="gene ID" value="ENSMUSG00000022827.15"/>
</dbReference>
<dbReference type="Ensembl" id="ENSMUST00000130028.2">
    <molecule id="Q9D4V7-2"/>
    <property type="protein sequence ID" value="ENSMUSP00000122441.2"/>
    <property type="gene ID" value="ENSMUSG00000022827.15"/>
</dbReference>
<dbReference type="GeneID" id="67657"/>
<dbReference type="KEGG" id="mmu:67657"/>
<dbReference type="UCSC" id="uc007zec.1">
    <molecule id="Q9D4V7-1"/>
    <property type="organism name" value="mouse"/>
</dbReference>
<dbReference type="AGR" id="MGI:1914907"/>
<dbReference type="CTD" id="285282"/>
<dbReference type="MGI" id="MGI:1914907">
    <property type="gene designation" value="Rabl3"/>
</dbReference>
<dbReference type="VEuPathDB" id="HostDB:ENSMUSG00000022827"/>
<dbReference type="eggNOG" id="ENOG502QT3S">
    <property type="taxonomic scope" value="Eukaryota"/>
</dbReference>
<dbReference type="GeneTree" id="ENSGT00390000007467"/>
<dbReference type="HOGENOM" id="CLU_084875_1_0_1"/>
<dbReference type="InParanoid" id="Q9D4V7"/>
<dbReference type="OMA" id="THLICQQ"/>
<dbReference type="OrthoDB" id="5914890at2759"/>
<dbReference type="PhylomeDB" id="Q9D4V7"/>
<dbReference type="TreeFam" id="TF320841"/>
<dbReference type="BioGRID-ORCS" id="67657">
    <property type="hits" value="6 hits in 76 CRISPR screens"/>
</dbReference>
<dbReference type="ChiTaRS" id="Rabl3">
    <property type="organism name" value="mouse"/>
</dbReference>
<dbReference type="PRO" id="PR:Q9D4V7"/>
<dbReference type="Proteomes" id="UP000000589">
    <property type="component" value="Chromosome 16"/>
</dbReference>
<dbReference type="RNAct" id="Q9D4V7">
    <property type="molecule type" value="protein"/>
</dbReference>
<dbReference type="Bgee" id="ENSMUSG00000022827">
    <property type="expression patterns" value="Expressed in metanephric ureteric bud and 244 other cell types or tissues"/>
</dbReference>
<dbReference type="GO" id="GO:0005525">
    <property type="term" value="F:GTP binding"/>
    <property type="evidence" value="ECO:0000314"/>
    <property type="project" value="UniProtKB"/>
</dbReference>
<dbReference type="GO" id="GO:0042803">
    <property type="term" value="F:protein homodimerization activity"/>
    <property type="evidence" value="ECO:0000314"/>
    <property type="project" value="UniProtKB"/>
</dbReference>
<dbReference type="GO" id="GO:0030183">
    <property type="term" value="P:B cell differentiation"/>
    <property type="evidence" value="ECO:0000315"/>
    <property type="project" value="UniProtKB"/>
</dbReference>
<dbReference type="GO" id="GO:0001779">
    <property type="term" value="P:natural killer cell differentiation"/>
    <property type="evidence" value="ECO:0000315"/>
    <property type="project" value="UniProtKB"/>
</dbReference>
<dbReference type="GO" id="GO:0050821">
    <property type="term" value="P:protein stabilization"/>
    <property type="evidence" value="ECO:0000314"/>
    <property type="project" value="UniProtKB"/>
</dbReference>
<dbReference type="GO" id="GO:1903059">
    <property type="term" value="P:regulation of protein lipidation"/>
    <property type="evidence" value="ECO:0000250"/>
    <property type="project" value="UniProtKB"/>
</dbReference>
<dbReference type="GO" id="GO:0046578">
    <property type="term" value="P:regulation of Ras protein signal transduction"/>
    <property type="evidence" value="ECO:0000250"/>
    <property type="project" value="UniProtKB"/>
</dbReference>
<dbReference type="GO" id="GO:0033077">
    <property type="term" value="P:T cell differentiation in thymus"/>
    <property type="evidence" value="ECO:0000315"/>
    <property type="project" value="UniProtKB"/>
</dbReference>
<dbReference type="CDD" id="cd04102">
    <property type="entry name" value="RabL3"/>
    <property type="match status" value="1"/>
</dbReference>
<dbReference type="FunFam" id="3.40.50.300:FF:000525">
    <property type="entry name" value="rab-like protein 3 isoform X1"/>
    <property type="match status" value="1"/>
</dbReference>
<dbReference type="Gene3D" id="3.40.50.300">
    <property type="entry name" value="P-loop containing nucleotide triphosphate hydrolases"/>
    <property type="match status" value="1"/>
</dbReference>
<dbReference type="InterPro" id="IPR027417">
    <property type="entry name" value="P-loop_NTPase"/>
</dbReference>
<dbReference type="PANTHER" id="PTHR24073">
    <property type="entry name" value="DRAB5-RELATED"/>
    <property type="match status" value="1"/>
</dbReference>
<dbReference type="Pfam" id="PF08477">
    <property type="entry name" value="Roc"/>
    <property type="match status" value="1"/>
</dbReference>
<dbReference type="PRINTS" id="PR00449">
    <property type="entry name" value="RASTRNSFRMNG"/>
</dbReference>
<dbReference type="SMART" id="SM00175">
    <property type="entry name" value="RAB"/>
    <property type="match status" value="1"/>
</dbReference>
<dbReference type="SUPFAM" id="SSF52540">
    <property type="entry name" value="P-loop containing nucleoside triphosphate hydrolases"/>
    <property type="match status" value="1"/>
</dbReference>
<dbReference type="PROSITE" id="PS51419">
    <property type="entry name" value="RAB"/>
    <property type="match status" value="1"/>
</dbReference>
<protein>
    <recommendedName>
        <fullName>Rab-like protein 3</fullName>
    </recommendedName>
</protein>